<dbReference type="EC" id="1.5.1.5" evidence="1"/>
<dbReference type="EC" id="3.5.4.9" evidence="1"/>
<dbReference type="EMBL" id="AE017198">
    <property type="protein sequence ID" value="AAS09036.1"/>
    <property type="molecule type" value="Genomic_DNA"/>
</dbReference>
<dbReference type="RefSeq" id="WP_011162044.1">
    <property type="nucleotide sequence ID" value="NC_005362.1"/>
</dbReference>
<dbReference type="SMR" id="Q74J95"/>
<dbReference type="GeneID" id="83570348"/>
<dbReference type="KEGG" id="ljo:LJ_1215"/>
<dbReference type="PATRIC" id="fig|257314.6.peg.1081"/>
<dbReference type="eggNOG" id="COG0190">
    <property type="taxonomic scope" value="Bacteria"/>
</dbReference>
<dbReference type="HOGENOM" id="CLU_034045_2_1_9"/>
<dbReference type="UniPathway" id="UPA00193"/>
<dbReference type="Proteomes" id="UP000000581">
    <property type="component" value="Chromosome"/>
</dbReference>
<dbReference type="GO" id="GO:0005829">
    <property type="term" value="C:cytosol"/>
    <property type="evidence" value="ECO:0007669"/>
    <property type="project" value="TreeGrafter"/>
</dbReference>
<dbReference type="GO" id="GO:0004477">
    <property type="term" value="F:methenyltetrahydrofolate cyclohydrolase activity"/>
    <property type="evidence" value="ECO:0007669"/>
    <property type="project" value="UniProtKB-UniRule"/>
</dbReference>
<dbReference type="GO" id="GO:0004488">
    <property type="term" value="F:methylenetetrahydrofolate dehydrogenase (NADP+) activity"/>
    <property type="evidence" value="ECO:0007669"/>
    <property type="project" value="UniProtKB-UniRule"/>
</dbReference>
<dbReference type="GO" id="GO:0000105">
    <property type="term" value="P:L-histidine biosynthetic process"/>
    <property type="evidence" value="ECO:0007669"/>
    <property type="project" value="UniProtKB-KW"/>
</dbReference>
<dbReference type="GO" id="GO:0009086">
    <property type="term" value="P:methionine biosynthetic process"/>
    <property type="evidence" value="ECO:0007669"/>
    <property type="project" value="UniProtKB-KW"/>
</dbReference>
<dbReference type="GO" id="GO:0006164">
    <property type="term" value="P:purine nucleotide biosynthetic process"/>
    <property type="evidence" value="ECO:0007669"/>
    <property type="project" value="UniProtKB-KW"/>
</dbReference>
<dbReference type="GO" id="GO:0035999">
    <property type="term" value="P:tetrahydrofolate interconversion"/>
    <property type="evidence" value="ECO:0007669"/>
    <property type="project" value="UniProtKB-UniRule"/>
</dbReference>
<dbReference type="CDD" id="cd01080">
    <property type="entry name" value="NAD_bind_m-THF_DH_Cyclohyd"/>
    <property type="match status" value="1"/>
</dbReference>
<dbReference type="FunFam" id="3.40.50.10860:FF:000005">
    <property type="entry name" value="C-1-tetrahydrofolate synthase, cytoplasmic, putative"/>
    <property type="match status" value="1"/>
</dbReference>
<dbReference type="Gene3D" id="3.40.50.10860">
    <property type="entry name" value="Leucine Dehydrogenase, chain A, domain 1"/>
    <property type="match status" value="1"/>
</dbReference>
<dbReference type="Gene3D" id="3.40.50.720">
    <property type="entry name" value="NAD(P)-binding Rossmann-like Domain"/>
    <property type="match status" value="1"/>
</dbReference>
<dbReference type="HAMAP" id="MF_01576">
    <property type="entry name" value="THF_DHG_CYH"/>
    <property type="match status" value="1"/>
</dbReference>
<dbReference type="InterPro" id="IPR046346">
    <property type="entry name" value="Aminoacid_DH-like_N_sf"/>
</dbReference>
<dbReference type="InterPro" id="IPR036291">
    <property type="entry name" value="NAD(P)-bd_dom_sf"/>
</dbReference>
<dbReference type="InterPro" id="IPR000672">
    <property type="entry name" value="THF_DH/CycHdrlase"/>
</dbReference>
<dbReference type="InterPro" id="IPR020630">
    <property type="entry name" value="THF_DH/CycHdrlase_cat_dom"/>
</dbReference>
<dbReference type="InterPro" id="IPR020867">
    <property type="entry name" value="THF_DH/CycHdrlase_CS"/>
</dbReference>
<dbReference type="InterPro" id="IPR020631">
    <property type="entry name" value="THF_DH/CycHdrlase_NAD-bd_dom"/>
</dbReference>
<dbReference type="PANTHER" id="PTHR48099:SF5">
    <property type="entry name" value="C-1-TETRAHYDROFOLATE SYNTHASE, CYTOPLASMIC"/>
    <property type="match status" value="1"/>
</dbReference>
<dbReference type="PANTHER" id="PTHR48099">
    <property type="entry name" value="C-1-TETRAHYDROFOLATE SYNTHASE, CYTOPLASMIC-RELATED"/>
    <property type="match status" value="1"/>
</dbReference>
<dbReference type="Pfam" id="PF00763">
    <property type="entry name" value="THF_DHG_CYH"/>
    <property type="match status" value="1"/>
</dbReference>
<dbReference type="Pfam" id="PF02882">
    <property type="entry name" value="THF_DHG_CYH_C"/>
    <property type="match status" value="1"/>
</dbReference>
<dbReference type="PRINTS" id="PR00085">
    <property type="entry name" value="THFDHDRGNASE"/>
</dbReference>
<dbReference type="SUPFAM" id="SSF53223">
    <property type="entry name" value="Aminoacid dehydrogenase-like, N-terminal domain"/>
    <property type="match status" value="1"/>
</dbReference>
<dbReference type="SUPFAM" id="SSF51735">
    <property type="entry name" value="NAD(P)-binding Rossmann-fold domains"/>
    <property type="match status" value="1"/>
</dbReference>
<dbReference type="PROSITE" id="PS00766">
    <property type="entry name" value="THF_DHG_CYH_1"/>
    <property type="match status" value="1"/>
</dbReference>
<dbReference type="PROSITE" id="PS00767">
    <property type="entry name" value="THF_DHG_CYH_2"/>
    <property type="match status" value="1"/>
</dbReference>
<evidence type="ECO:0000255" key="1">
    <source>
        <dbReference type="HAMAP-Rule" id="MF_01576"/>
    </source>
</evidence>
<feature type="chain" id="PRO_0000268375" description="Bifunctional protein FolD 1">
    <location>
        <begin position="1"/>
        <end position="283"/>
    </location>
</feature>
<feature type="binding site" evidence="1">
    <location>
        <begin position="166"/>
        <end position="168"/>
    </location>
    <ligand>
        <name>NADP(+)</name>
        <dbReference type="ChEBI" id="CHEBI:58349"/>
    </ligand>
</feature>
<feature type="binding site" evidence="1">
    <location>
        <position position="232"/>
    </location>
    <ligand>
        <name>NADP(+)</name>
        <dbReference type="ChEBI" id="CHEBI:58349"/>
    </ligand>
</feature>
<reference key="1">
    <citation type="journal article" date="2004" name="Proc. Natl. Acad. Sci. U.S.A.">
        <title>The genome sequence of the probiotic intestinal bacterium Lactobacillus johnsonii NCC 533.</title>
        <authorList>
            <person name="Pridmore R.D."/>
            <person name="Berger B."/>
            <person name="Desiere F."/>
            <person name="Vilanova D."/>
            <person name="Barretto C."/>
            <person name="Pittet A.-C."/>
            <person name="Zwahlen M.-C."/>
            <person name="Rouvet M."/>
            <person name="Altermann E."/>
            <person name="Barrangou R."/>
            <person name="Mollet B."/>
            <person name="Mercenier A."/>
            <person name="Klaenhammer T."/>
            <person name="Arigoni F."/>
            <person name="Schell M.A."/>
        </authorList>
    </citation>
    <scope>NUCLEOTIDE SEQUENCE [LARGE SCALE GENOMIC DNA]</scope>
    <source>
        <strain>CNCM I-1225 / La1 / NCC 533</strain>
    </source>
</reference>
<organism>
    <name type="scientific">Lactobacillus johnsonii (strain CNCM I-12250 / La1 / NCC 533)</name>
    <dbReference type="NCBI Taxonomy" id="257314"/>
    <lineage>
        <taxon>Bacteria</taxon>
        <taxon>Bacillati</taxon>
        <taxon>Bacillota</taxon>
        <taxon>Bacilli</taxon>
        <taxon>Lactobacillales</taxon>
        <taxon>Lactobacillaceae</taxon>
        <taxon>Lactobacillus</taxon>
    </lineage>
</organism>
<name>FOLD1_LACJO</name>
<keyword id="KW-0028">Amino-acid biosynthesis</keyword>
<keyword id="KW-0368">Histidine biosynthesis</keyword>
<keyword id="KW-0378">Hydrolase</keyword>
<keyword id="KW-0486">Methionine biosynthesis</keyword>
<keyword id="KW-0511">Multifunctional enzyme</keyword>
<keyword id="KW-0521">NADP</keyword>
<keyword id="KW-0554">One-carbon metabolism</keyword>
<keyword id="KW-0560">Oxidoreductase</keyword>
<keyword id="KW-0658">Purine biosynthesis</keyword>
<gene>
    <name evidence="1" type="primary">folD1</name>
    <name type="ordered locus">LJ_1215</name>
</gene>
<comment type="function">
    <text evidence="1">Catalyzes the oxidation of 5,10-methylenetetrahydrofolate to 5,10-methenyltetrahydrofolate and then the hydrolysis of 5,10-methenyltetrahydrofolate to 10-formyltetrahydrofolate.</text>
</comment>
<comment type="catalytic activity">
    <reaction evidence="1">
        <text>(6R)-5,10-methylene-5,6,7,8-tetrahydrofolate + NADP(+) = (6R)-5,10-methenyltetrahydrofolate + NADPH</text>
        <dbReference type="Rhea" id="RHEA:22812"/>
        <dbReference type="ChEBI" id="CHEBI:15636"/>
        <dbReference type="ChEBI" id="CHEBI:57455"/>
        <dbReference type="ChEBI" id="CHEBI:57783"/>
        <dbReference type="ChEBI" id="CHEBI:58349"/>
        <dbReference type="EC" id="1.5.1.5"/>
    </reaction>
</comment>
<comment type="catalytic activity">
    <reaction evidence="1">
        <text>(6R)-5,10-methenyltetrahydrofolate + H2O = (6R)-10-formyltetrahydrofolate + H(+)</text>
        <dbReference type="Rhea" id="RHEA:23700"/>
        <dbReference type="ChEBI" id="CHEBI:15377"/>
        <dbReference type="ChEBI" id="CHEBI:15378"/>
        <dbReference type="ChEBI" id="CHEBI:57455"/>
        <dbReference type="ChEBI" id="CHEBI:195366"/>
        <dbReference type="EC" id="3.5.4.9"/>
    </reaction>
</comment>
<comment type="pathway">
    <text evidence="1">One-carbon metabolism; tetrahydrofolate interconversion.</text>
</comment>
<comment type="subunit">
    <text evidence="1">Homodimer.</text>
</comment>
<comment type="similarity">
    <text evidence="1">Belongs to the tetrahydrofolate dehydrogenase/cyclohydrolase family.</text>
</comment>
<sequence length="283" mass="31279">MTNIINGRQIAKQLNQETKTRVDKLKEEGIIPGIVVILVGDDPASVIYTRNKQKNAEKLGMKSILRKFPKDVSQAEVLQAIHHYNDDPTIHAILIQLPLPKHLNQTELIEAIAPEKDVDGFNSKNVGKLYNNEEGHYPVSCTSRGIMTLLHTYLDKIEGLNVTIVGRSILVSRPLQSLLINENATVTMVSLHTDNIDYYTKHADILVVAAGKPNLIKKDQVKPGATVIDVGINRMANHYLVGDVDFDDVKEVAKNITPVPGGVGPMTIATLMQQTVDLAEWNK</sequence>
<protein>
    <recommendedName>
        <fullName evidence="1">Bifunctional protein FolD 1</fullName>
    </recommendedName>
    <domain>
        <recommendedName>
            <fullName evidence="1">Methylenetetrahydrofolate dehydrogenase</fullName>
            <ecNumber evidence="1">1.5.1.5</ecNumber>
        </recommendedName>
    </domain>
    <domain>
        <recommendedName>
            <fullName evidence="1">Methenyltetrahydrofolate cyclohydrolase</fullName>
            <ecNumber evidence="1">3.5.4.9</ecNumber>
        </recommendedName>
    </domain>
</protein>
<proteinExistence type="inferred from homology"/>
<accession>Q74J95</accession>